<sequence>MKLNDTIVALATPSGAGAIAIIRVSGPDALEIVAPLFKAKSKKDLAKQPTHTLHLGNVMDGERTIDEVLASVFRAPKSYTGEETVELSCHGSPYIQQEIIQLLIRKSCRSAEAGEFTLRAFLNAKMDLSQAEAVADLINSENAASHQMAMQQMRGGFSNEIQKLREELLNFASLIELELDFAEEDVEFANRDQFKDLVSKIQTVLKRLLDSFATGNVLKNGIPVAIVGEPNVGKSTLLNALLNEERAIVSEIAGTTRDTIEDEMSIGGVGFRFIDTAGIRETKDVVESIGIKKTFEKISQAQVVVYLVDSSQIAVNRERLQQVRIEIEKIKNKFPQKPLLIIANKTDRLADEEIHNLKTKLEEISSHAERAQFLLLSAKTNLGVEELKEKLLEYVNTGALRNSDTIVTNSRHYAALLKALEEINKVEEGLNADLSGDLLAIDIRQALHHFGEITGEITNDDLLGNIFANFCIGK</sequence>
<evidence type="ECO:0000255" key="1">
    <source>
        <dbReference type="HAMAP-Rule" id="MF_00379"/>
    </source>
</evidence>
<comment type="function">
    <text evidence="1">Exhibits a very high intrinsic GTPase hydrolysis rate. Involved in the addition of a carboxymethylaminomethyl (cmnm) group at the wobble position (U34) of certain tRNAs, forming tRNA-cmnm(5)s(2)U34.</text>
</comment>
<comment type="cofactor">
    <cofactor evidence="1">
        <name>K(+)</name>
        <dbReference type="ChEBI" id="CHEBI:29103"/>
    </cofactor>
    <text evidence="1">Binds 1 potassium ion per subunit.</text>
</comment>
<comment type="subunit">
    <text evidence="1">Homodimer. Heterotetramer of two MnmE and two MnmG subunits.</text>
</comment>
<comment type="subcellular location">
    <subcellularLocation>
        <location evidence="1">Cytoplasm</location>
    </subcellularLocation>
</comment>
<comment type="similarity">
    <text evidence="1">Belongs to the TRAFAC class TrmE-Era-EngA-EngB-Septin-like GTPase superfamily. TrmE GTPase family.</text>
</comment>
<dbReference type="EC" id="3.6.-.-" evidence="1"/>
<dbReference type="EMBL" id="CU207366">
    <property type="protein sequence ID" value="CAL66881.1"/>
    <property type="molecule type" value="Genomic_DNA"/>
</dbReference>
<dbReference type="RefSeq" id="WP_011709788.1">
    <property type="nucleotide sequence ID" value="NC_008571.1"/>
</dbReference>
<dbReference type="SMR" id="A0M2N6"/>
<dbReference type="STRING" id="411154.GFO_1916"/>
<dbReference type="KEGG" id="gfo:GFO_1916"/>
<dbReference type="eggNOG" id="COG0486">
    <property type="taxonomic scope" value="Bacteria"/>
</dbReference>
<dbReference type="HOGENOM" id="CLU_019624_4_1_10"/>
<dbReference type="OrthoDB" id="9805918at2"/>
<dbReference type="Proteomes" id="UP000000755">
    <property type="component" value="Chromosome"/>
</dbReference>
<dbReference type="GO" id="GO:0005829">
    <property type="term" value="C:cytosol"/>
    <property type="evidence" value="ECO:0007669"/>
    <property type="project" value="TreeGrafter"/>
</dbReference>
<dbReference type="GO" id="GO:0016887">
    <property type="term" value="F:ATP hydrolysis activity"/>
    <property type="evidence" value="ECO:0007669"/>
    <property type="project" value="InterPro"/>
</dbReference>
<dbReference type="GO" id="GO:0005525">
    <property type="term" value="F:GTP binding"/>
    <property type="evidence" value="ECO:0007669"/>
    <property type="project" value="UniProtKB-UniRule"/>
</dbReference>
<dbReference type="GO" id="GO:0003924">
    <property type="term" value="F:GTPase activity"/>
    <property type="evidence" value="ECO:0007669"/>
    <property type="project" value="UniProtKB-UniRule"/>
</dbReference>
<dbReference type="GO" id="GO:0046872">
    <property type="term" value="F:metal ion binding"/>
    <property type="evidence" value="ECO:0007669"/>
    <property type="project" value="UniProtKB-KW"/>
</dbReference>
<dbReference type="GO" id="GO:0030488">
    <property type="term" value="P:tRNA methylation"/>
    <property type="evidence" value="ECO:0007669"/>
    <property type="project" value="TreeGrafter"/>
</dbReference>
<dbReference type="GO" id="GO:0002098">
    <property type="term" value="P:tRNA wobble uridine modification"/>
    <property type="evidence" value="ECO:0007669"/>
    <property type="project" value="TreeGrafter"/>
</dbReference>
<dbReference type="CDD" id="cd04164">
    <property type="entry name" value="trmE"/>
    <property type="match status" value="1"/>
</dbReference>
<dbReference type="CDD" id="cd14858">
    <property type="entry name" value="TrmE_N"/>
    <property type="match status" value="1"/>
</dbReference>
<dbReference type="FunFam" id="3.30.1360.120:FF:000003">
    <property type="entry name" value="tRNA modification GTPase MnmE"/>
    <property type="match status" value="1"/>
</dbReference>
<dbReference type="FunFam" id="3.40.50.300:FF:001376">
    <property type="entry name" value="tRNA modification GTPase MnmE"/>
    <property type="match status" value="1"/>
</dbReference>
<dbReference type="Gene3D" id="3.40.50.300">
    <property type="entry name" value="P-loop containing nucleotide triphosphate hydrolases"/>
    <property type="match status" value="1"/>
</dbReference>
<dbReference type="Gene3D" id="3.30.1360.120">
    <property type="entry name" value="Probable tRNA modification gtpase trme, domain 1"/>
    <property type="match status" value="1"/>
</dbReference>
<dbReference type="Gene3D" id="1.20.120.430">
    <property type="entry name" value="tRNA modification GTPase MnmE domain 2"/>
    <property type="match status" value="1"/>
</dbReference>
<dbReference type="HAMAP" id="MF_00379">
    <property type="entry name" value="GTPase_MnmE"/>
    <property type="match status" value="1"/>
</dbReference>
<dbReference type="InterPro" id="IPR003593">
    <property type="entry name" value="AAA+_ATPase"/>
</dbReference>
<dbReference type="InterPro" id="IPR031168">
    <property type="entry name" value="G_TrmE"/>
</dbReference>
<dbReference type="InterPro" id="IPR006073">
    <property type="entry name" value="GTP-bd"/>
</dbReference>
<dbReference type="InterPro" id="IPR018948">
    <property type="entry name" value="GTP-bd_TrmE_N"/>
</dbReference>
<dbReference type="InterPro" id="IPR004520">
    <property type="entry name" value="GTPase_MnmE"/>
</dbReference>
<dbReference type="InterPro" id="IPR027368">
    <property type="entry name" value="MnmE_dom2"/>
</dbReference>
<dbReference type="InterPro" id="IPR025867">
    <property type="entry name" value="MnmE_helical"/>
</dbReference>
<dbReference type="InterPro" id="IPR027417">
    <property type="entry name" value="P-loop_NTPase"/>
</dbReference>
<dbReference type="InterPro" id="IPR005225">
    <property type="entry name" value="Small_GTP-bd"/>
</dbReference>
<dbReference type="InterPro" id="IPR027266">
    <property type="entry name" value="TrmE/GcvT_dom1"/>
</dbReference>
<dbReference type="NCBIfam" id="TIGR00450">
    <property type="entry name" value="mnmE_trmE_thdF"/>
    <property type="match status" value="1"/>
</dbReference>
<dbReference type="NCBIfam" id="NF003661">
    <property type="entry name" value="PRK05291.1-3"/>
    <property type="match status" value="1"/>
</dbReference>
<dbReference type="NCBIfam" id="TIGR00231">
    <property type="entry name" value="small_GTP"/>
    <property type="match status" value="1"/>
</dbReference>
<dbReference type="PANTHER" id="PTHR42714">
    <property type="entry name" value="TRNA MODIFICATION GTPASE GTPBP3"/>
    <property type="match status" value="1"/>
</dbReference>
<dbReference type="PANTHER" id="PTHR42714:SF2">
    <property type="entry name" value="TRNA MODIFICATION GTPASE GTPBP3, MITOCHONDRIAL"/>
    <property type="match status" value="1"/>
</dbReference>
<dbReference type="Pfam" id="PF01926">
    <property type="entry name" value="MMR_HSR1"/>
    <property type="match status" value="1"/>
</dbReference>
<dbReference type="Pfam" id="PF12631">
    <property type="entry name" value="MnmE_helical"/>
    <property type="match status" value="1"/>
</dbReference>
<dbReference type="Pfam" id="PF10396">
    <property type="entry name" value="TrmE_N"/>
    <property type="match status" value="1"/>
</dbReference>
<dbReference type="PRINTS" id="PR00449">
    <property type="entry name" value="RASTRNSFRMNG"/>
</dbReference>
<dbReference type="SMART" id="SM00382">
    <property type="entry name" value="AAA"/>
    <property type="match status" value="1"/>
</dbReference>
<dbReference type="SMART" id="SM00173">
    <property type="entry name" value="RAS"/>
    <property type="match status" value="1"/>
</dbReference>
<dbReference type="SUPFAM" id="SSF52540">
    <property type="entry name" value="P-loop containing nucleoside triphosphate hydrolases"/>
    <property type="match status" value="1"/>
</dbReference>
<dbReference type="SUPFAM" id="SSF116878">
    <property type="entry name" value="TrmE connector domain"/>
    <property type="match status" value="1"/>
</dbReference>
<dbReference type="PROSITE" id="PS51709">
    <property type="entry name" value="G_TRME"/>
    <property type="match status" value="1"/>
</dbReference>
<reference key="1">
    <citation type="journal article" date="2006" name="Environ. Microbiol.">
        <title>Whole genome analysis of the marine Bacteroidetes'Gramella forsetii' reveals adaptations to degradation of polymeric organic matter.</title>
        <authorList>
            <person name="Bauer M."/>
            <person name="Kube M."/>
            <person name="Teeling H."/>
            <person name="Richter M."/>
            <person name="Lombardot T."/>
            <person name="Allers E."/>
            <person name="Wuerdemann C.A."/>
            <person name="Quast C."/>
            <person name="Kuhl H."/>
            <person name="Knaust F."/>
            <person name="Woebken D."/>
            <person name="Bischof K."/>
            <person name="Mussmann M."/>
            <person name="Choudhuri J.V."/>
            <person name="Meyer F."/>
            <person name="Reinhardt R."/>
            <person name="Amann R.I."/>
            <person name="Gloeckner F.O."/>
        </authorList>
    </citation>
    <scope>NUCLEOTIDE SEQUENCE [LARGE SCALE GENOMIC DNA]</scope>
    <source>
        <strain>DSM 17595 / CGMCC 1.15422 / KT0803</strain>
    </source>
</reference>
<accession>A0M2N6</accession>
<feature type="chain" id="PRO_0000345793" description="tRNA modification GTPase MnmE">
    <location>
        <begin position="1"/>
        <end position="474"/>
    </location>
</feature>
<feature type="domain" description="TrmE-type G">
    <location>
        <begin position="221"/>
        <end position="396"/>
    </location>
</feature>
<feature type="binding site" evidence="1">
    <location>
        <position position="23"/>
    </location>
    <ligand>
        <name>(6S)-5-formyl-5,6,7,8-tetrahydrofolate</name>
        <dbReference type="ChEBI" id="CHEBI:57457"/>
    </ligand>
</feature>
<feature type="binding site" evidence="1">
    <location>
        <position position="86"/>
    </location>
    <ligand>
        <name>(6S)-5-formyl-5,6,7,8-tetrahydrofolate</name>
        <dbReference type="ChEBI" id="CHEBI:57457"/>
    </ligand>
</feature>
<feature type="binding site" evidence="1">
    <location>
        <position position="125"/>
    </location>
    <ligand>
        <name>(6S)-5-formyl-5,6,7,8-tetrahydrofolate</name>
        <dbReference type="ChEBI" id="CHEBI:57457"/>
    </ligand>
</feature>
<feature type="binding site" evidence="1">
    <location>
        <begin position="231"/>
        <end position="236"/>
    </location>
    <ligand>
        <name>GTP</name>
        <dbReference type="ChEBI" id="CHEBI:37565"/>
    </ligand>
</feature>
<feature type="binding site" evidence="1">
    <location>
        <position position="231"/>
    </location>
    <ligand>
        <name>K(+)</name>
        <dbReference type="ChEBI" id="CHEBI:29103"/>
    </ligand>
</feature>
<feature type="binding site" evidence="1">
    <location>
        <position position="235"/>
    </location>
    <ligand>
        <name>Mg(2+)</name>
        <dbReference type="ChEBI" id="CHEBI:18420"/>
    </ligand>
</feature>
<feature type="binding site" evidence="1">
    <location>
        <begin position="250"/>
        <end position="256"/>
    </location>
    <ligand>
        <name>GTP</name>
        <dbReference type="ChEBI" id="CHEBI:37565"/>
    </ligand>
</feature>
<feature type="binding site" evidence="1">
    <location>
        <position position="250"/>
    </location>
    <ligand>
        <name>K(+)</name>
        <dbReference type="ChEBI" id="CHEBI:29103"/>
    </ligand>
</feature>
<feature type="binding site" evidence="1">
    <location>
        <position position="252"/>
    </location>
    <ligand>
        <name>K(+)</name>
        <dbReference type="ChEBI" id="CHEBI:29103"/>
    </ligand>
</feature>
<feature type="binding site" evidence="1">
    <location>
        <position position="255"/>
    </location>
    <ligand>
        <name>K(+)</name>
        <dbReference type="ChEBI" id="CHEBI:29103"/>
    </ligand>
</feature>
<feature type="binding site" evidence="1">
    <location>
        <position position="256"/>
    </location>
    <ligand>
        <name>Mg(2+)</name>
        <dbReference type="ChEBI" id="CHEBI:18420"/>
    </ligand>
</feature>
<feature type="binding site" evidence="1">
    <location>
        <begin position="275"/>
        <end position="278"/>
    </location>
    <ligand>
        <name>GTP</name>
        <dbReference type="ChEBI" id="CHEBI:37565"/>
    </ligand>
</feature>
<feature type="binding site" evidence="1">
    <location>
        <position position="474"/>
    </location>
    <ligand>
        <name>(6S)-5-formyl-5,6,7,8-tetrahydrofolate</name>
        <dbReference type="ChEBI" id="CHEBI:57457"/>
    </ligand>
</feature>
<keyword id="KW-0963">Cytoplasm</keyword>
<keyword id="KW-0342">GTP-binding</keyword>
<keyword id="KW-0378">Hydrolase</keyword>
<keyword id="KW-0460">Magnesium</keyword>
<keyword id="KW-0479">Metal-binding</keyword>
<keyword id="KW-0547">Nucleotide-binding</keyword>
<keyword id="KW-0630">Potassium</keyword>
<keyword id="KW-0819">tRNA processing</keyword>
<gene>
    <name evidence="1" type="primary">mnmE</name>
    <name evidence="1" type="synonym">trmE</name>
    <name type="ordered locus">GFO_1916</name>
</gene>
<name>MNME_CHRFK</name>
<organism>
    <name type="scientific">Christiangramia forsetii (strain DSM 17595 / CGMCC 1.15422 / KT0803)</name>
    <name type="common">Gramella forsetii</name>
    <dbReference type="NCBI Taxonomy" id="411154"/>
    <lineage>
        <taxon>Bacteria</taxon>
        <taxon>Pseudomonadati</taxon>
        <taxon>Bacteroidota</taxon>
        <taxon>Flavobacteriia</taxon>
        <taxon>Flavobacteriales</taxon>
        <taxon>Flavobacteriaceae</taxon>
        <taxon>Christiangramia</taxon>
    </lineage>
</organism>
<protein>
    <recommendedName>
        <fullName evidence="1">tRNA modification GTPase MnmE</fullName>
        <ecNumber evidence="1">3.6.-.-</ecNumber>
    </recommendedName>
</protein>
<proteinExistence type="inferred from homology"/>